<evidence type="ECO:0000255" key="1">
    <source>
        <dbReference type="HAMAP-Rule" id="MF_01047"/>
    </source>
</evidence>
<name>Y2522_SHEB9</name>
<sequence length="179" mass="20506">MIFYLHGFDATSPGNHEKMRQLQFIDPDVRLVSYSTLHPKHDMQHLLKEVAKQMKHSDDPAPLMVGVGLGAYWAERIGFLNGLKSVLINPNLHPEDNMQGKIDRPEEYADIANKCVSQFREKNTHKAMCIFSVNDEMFDNQQLASELSAYYSIDWDDVQPHKFPQLAAHLPKIKAFKLA</sequence>
<feature type="chain" id="PRO_1000084416" description="UPF0227 protein Sbal195_2522">
    <location>
        <begin position="1"/>
        <end position="179"/>
    </location>
</feature>
<protein>
    <recommendedName>
        <fullName evidence="1">UPF0227 protein Sbal195_2522</fullName>
    </recommendedName>
</protein>
<proteinExistence type="inferred from homology"/>
<accession>A9L4A0</accession>
<gene>
    <name type="ordered locus">Sbal195_2522</name>
</gene>
<comment type="similarity">
    <text evidence="1">Belongs to the UPF0227 family.</text>
</comment>
<dbReference type="EMBL" id="CP000891">
    <property type="protein sequence ID" value="ABX49690.1"/>
    <property type="molecule type" value="Genomic_DNA"/>
</dbReference>
<dbReference type="SMR" id="A9L4A0"/>
<dbReference type="ESTHER" id="sheb2-y1944">
    <property type="family name" value="abh_upf00227"/>
</dbReference>
<dbReference type="KEGG" id="sbn:Sbal195_2522"/>
<dbReference type="HOGENOM" id="CLU_128769_0_0_6"/>
<dbReference type="Proteomes" id="UP000000770">
    <property type="component" value="Chromosome"/>
</dbReference>
<dbReference type="Gene3D" id="3.40.50.1820">
    <property type="entry name" value="alpha/beta hydrolase"/>
    <property type="match status" value="1"/>
</dbReference>
<dbReference type="HAMAP" id="MF_01047">
    <property type="entry name" value="UPF0227"/>
    <property type="match status" value="1"/>
</dbReference>
<dbReference type="InterPro" id="IPR029058">
    <property type="entry name" value="AB_hydrolase_fold"/>
</dbReference>
<dbReference type="InterPro" id="IPR022987">
    <property type="entry name" value="UPF0227"/>
</dbReference>
<dbReference type="InterPro" id="IPR008886">
    <property type="entry name" value="UPF0227/Esterase_YqiA"/>
</dbReference>
<dbReference type="NCBIfam" id="NF003431">
    <property type="entry name" value="PRK04940.1"/>
    <property type="match status" value="1"/>
</dbReference>
<dbReference type="PANTHER" id="PTHR35602">
    <property type="entry name" value="ESTERASE YQIA-RELATED"/>
    <property type="match status" value="1"/>
</dbReference>
<dbReference type="PANTHER" id="PTHR35602:SF2">
    <property type="entry name" value="UPF0227 PROTEIN YCFP"/>
    <property type="match status" value="1"/>
</dbReference>
<dbReference type="Pfam" id="PF05728">
    <property type="entry name" value="UPF0227"/>
    <property type="match status" value="1"/>
</dbReference>
<organism>
    <name type="scientific">Shewanella baltica (strain OS195)</name>
    <dbReference type="NCBI Taxonomy" id="399599"/>
    <lineage>
        <taxon>Bacteria</taxon>
        <taxon>Pseudomonadati</taxon>
        <taxon>Pseudomonadota</taxon>
        <taxon>Gammaproteobacteria</taxon>
        <taxon>Alteromonadales</taxon>
        <taxon>Shewanellaceae</taxon>
        <taxon>Shewanella</taxon>
    </lineage>
</organism>
<reference key="1">
    <citation type="submission" date="2007-11" db="EMBL/GenBank/DDBJ databases">
        <title>Complete sequence of chromosome of Shewanella baltica OS195.</title>
        <authorList>
            <consortium name="US DOE Joint Genome Institute"/>
            <person name="Copeland A."/>
            <person name="Lucas S."/>
            <person name="Lapidus A."/>
            <person name="Barry K."/>
            <person name="Glavina del Rio T."/>
            <person name="Dalin E."/>
            <person name="Tice H."/>
            <person name="Pitluck S."/>
            <person name="Chain P."/>
            <person name="Malfatti S."/>
            <person name="Shin M."/>
            <person name="Vergez L."/>
            <person name="Schmutz J."/>
            <person name="Larimer F."/>
            <person name="Land M."/>
            <person name="Hauser L."/>
            <person name="Kyrpides N."/>
            <person name="Kim E."/>
            <person name="Brettar I."/>
            <person name="Rodrigues J."/>
            <person name="Konstantinidis K."/>
            <person name="Klappenbach J."/>
            <person name="Hofle M."/>
            <person name="Tiedje J."/>
            <person name="Richardson P."/>
        </authorList>
    </citation>
    <scope>NUCLEOTIDE SEQUENCE [LARGE SCALE GENOMIC DNA]</scope>
    <source>
        <strain>OS195</strain>
    </source>
</reference>